<sequence length="341" mass="38485">MESQIQQLQQEIDEYQIRNAGELEAFKLEFTVRKGKIAGLFGQLKTVDSADRPRIGQLLNALKQAAEKKIEEAESCFAQKADADAPSIDLSLPGRRSFCGSEHPAQKVLGDMKRIFTAMGFSIATGPELELDEYNFDRLNFPPNHPARDMQDTFFITRGQPDGDVLLRTHTSPVQVRVMLDEKPPIRVICPGKVYRNEAISARSYCVFHQLEGLYIDKNVSFADLKATIYSFARQMFGSDVKLRFRPSFFPFTEPSAEVDVTCYLCGGKGCRVCKKSGWLEIMGCGMVHPNVMKNCGIDPEEWTGYAFGMGVDRTALLRYKIDDIRLLFENDVRMLSQFTA</sequence>
<dbReference type="EC" id="6.1.1.20" evidence="1"/>
<dbReference type="EMBL" id="CP001099">
    <property type="protein sequence ID" value="ACF10542.1"/>
    <property type="molecule type" value="Genomic_DNA"/>
</dbReference>
<dbReference type="RefSeq" id="WP_012501377.1">
    <property type="nucleotide sequence ID" value="NC_011027.1"/>
</dbReference>
<dbReference type="SMR" id="B3QRM0"/>
<dbReference type="STRING" id="517417.Cpar_0114"/>
<dbReference type="KEGG" id="cpc:Cpar_0114"/>
<dbReference type="eggNOG" id="COG0016">
    <property type="taxonomic scope" value="Bacteria"/>
</dbReference>
<dbReference type="HOGENOM" id="CLU_025086_0_1_10"/>
<dbReference type="OrthoDB" id="9800719at2"/>
<dbReference type="Proteomes" id="UP000008811">
    <property type="component" value="Chromosome"/>
</dbReference>
<dbReference type="GO" id="GO:0005737">
    <property type="term" value="C:cytoplasm"/>
    <property type="evidence" value="ECO:0007669"/>
    <property type="project" value="UniProtKB-SubCell"/>
</dbReference>
<dbReference type="GO" id="GO:0005524">
    <property type="term" value="F:ATP binding"/>
    <property type="evidence" value="ECO:0007669"/>
    <property type="project" value="UniProtKB-UniRule"/>
</dbReference>
<dbReference type="GO" id="GO:0000287">
    <property type="term" value="F:magnesium ion binding"/>
    <property type="evidence" value="ECO:0007669"/>
    <property type="project" value="UniProtKB-UniRule"/>
</dbReference>
<dbReference type="GO" id="GO:0004826">
    <property type="term" value="F:phenylalanine-tRNA ligase activity"/>
    <property type="evidence" value="ECO:0007669"/>
    <property type="project" value="UniProtKB-UniRule"/>
</dbReference>
<dbReference type="GO" id="GO:0000049">
    <property type="term" value="F:tRNA binding"/>
    <property type="evidence" value="ECO:0007669"/>
    <property type="project" value="InterPro"/>
</dbReference>
<dbReference type="GO" id="GO:0006432">
    <property type="term" value="P:phenylalanyl-tRNA aminoacylation"/>
    <property type="evidence" value="ECO:0007669"/>
    <property type="project" value="UniProtKB-UniRule"/>
</dbReference>
<dbReference type="CDD" id="cd00496">
    <property type="entry name" value="PheRS_alpha_core"/>
    <property type="match status" value="1"/>
</dbReference>
<dbReference type="Gene3D" id="3.30.930.10">
    <property type="entry name" value="Bira Bifunctional Protein, Domain 2"/>
    <property type="match status" value="1"/>
</dbReference>
<dbReference type="HAMAP" id="MF_00281">
    <property type="entry name" value="Phe_tRNA_synth_alpha1"/>
    <property type="match status" value="1"/>
</dbReference>
<dbReference type="InterPro" id="IPR006195">
    <property type="entry name" value="aa-tRNA-synth_II"/>
</dbReference>
<dbReference type="InterPro" id="IPR045864">
    <property type="entry name" value="aa-tRNA-synth_II/BPL/LPL"/>
</dbReference>
<dbReference type="InterPro" id="IPR004529">
    <property type="entry name" value="Phe-tRNA-synth_IIc_asu"/>
</dbReference>
<dbReference type="InterPro" id="IPR004188">
    <property type="entry name" value="Phe-tRNA_ligase_II_N"/>
</dbReference>
<dbReference type="InterPro" id="IPR022911">
    <property type="entry name" value="Phe_tRNA_ligase_alpha1_bac"/>
</dbReference>
<dbReference type="InterPro" id="IPR002319">
    <property type="entry name" value="Phenylalanyl-tRNA_Synthase"/>
</dbReference>
<dbReference type="InterPro" id="IPR010978">
    <property type="entry name" value="tRNA-bd_arm"/>
</dbReference>
<dbReference type="NCBIfam" id="TIGR00468">
    <property type="entry name" value="pheS"/>
    <property type="match status" value="1"/>
</dbReference>
<dbReference type="PANTHER" id="PTHR11538:SF41">
    <property type="entry name" value="PHENYLALANINE--TRNA LIGASE, MITOCHONDRIAL"/>
    <property type="match status" value="1"/>
</dbReference>
<dbReference type="PANTHER" id="PTHR11538">
    <property type="entry name" value="PHENYLALANYL-TRNA SYNTHETASE"/>
    <property type="match status" value="1"/>
</dbReference>
<dbReference type="Pfam" id="PF02912">
    <property type="entry name" value="Phe_tRNA-synt_N"/>
    <property type="match status" value="1"/>
</dbReference>
<dbReference type="Pfam" id="PF01409">
    <property type="entry name" value="tRNA-synt_2d"/>
    <property type="match status" value="1"/>
</dbReference>
<dbReference type="SUPFAM" id="SSF55681">
    <property type="entry name" value="Class II aaRS and biotin synthetases"/>
    <property type="match status" value="1"/>
</dbReference>
<dbReference type="SUPFAM" id="SSF46589">
    <property type="entry name" value="tRNA-binding arm"/>
    <property type="match status" value="1"/>
</dbReference>
<dbReference type="PROSITE" id="PS50862">
    <property type="entry name" value="AA_TRNA_LIGASE_II"/>
    <property type="match status" value="1"/>
</dbReference>
<comment type="catalytic activity">
    <reaction evidence="1">
        <text>tRNA(Phe) + L-phenylalanine + ATP = L-phenylalanyl-tRNA(Phe) + AMP + diphosphate + H(+)</text>
        <dbReference type="Rhea" id="RHEA:19413"/>
        <dbReference type="Rhea" id="RHEA-COMP:9668"/>
        <dbReference type="Rhea" id="RHEA-COMP:9699"/>
        <dbReference type="ChEBI" id="CHEBI:15378"/>
        <dbReference type="ChEBI" id="CHEBI:30616"/>
        <dbReference type="ChEBI" id="CHEBI:33019"/>
        <dbReference type="ChEBI" id="CHEBI:58095"/>
        <dbReference type="ChEBI" id="CHEBI:78442"/>
        <dbReference type="ChEBI" id="CHEBI:78531"/>
        <dbReference type="ChEBI" id="CHEBI:456215"/>
        <dbReference type="EC" id="6.1.1.20"/>
    </reaction>
</comment>
<comment type="cofactor">
    <cofactor evidence="1">
        <name>Mg(2+)</name>
        <dbReference type="ChEBI" id="CHEBI:18420"/>
    </cofactor>
    <text evidence="1">Binds 2 magnesium ions per tetramer.</text>
</comment>
<comment type="subunit">
    <text evidence="1">Tetramer of two alpha and two beta subunits.</text>
</comment>
<comment type="subcellular location">
    <subcellularLocation>
        <location evidence="1">Cytoplasm</location>
    </subcellularLocation>
</comment>
<comment type="similarity">
    <text evidence="1">Belongs to the class-II aminoacyl-tRNA synthetase family. Phe-tRNA synthetase alpha subunit type 1 subfamily.</text>
</comment>
<proteinExistence type="inferred from homology"/>
<feature type="chain" id="PRO_1000114855" description="Phenylalanine--tRNA ligase alpha subunit">
    <location>
        <begin position="1"/>
        <end position="341"/>
    </location>
</feature>
<feature type="binding site" evidence="1">
    <location>
        <position position="254"/>
    </location>
    <ligand>
        <name>Mg(2+)</name>
        <dbReference type="ChEBI" id="CHEBI:18420"/>
        <note>shared with beta subunit</note>
    </ligand>
</feature>
<gene>
    <name evidence="1" type="primary">pheS</name>
    <name type="ordered locus">Cpar_0114</name>
</gene>
<reference key="1">
    <citation type="submission" date="2008-06" db="EMBL/GenBank/DDBJ databases">
        <title>Complete sequence of Chlorobaculum parvum NCIB 8327.</title>
        <authorList>
            <consortium name="US DOE Joint Genome Institute"/>
            <person name="Lucas S."/>
            <person name="Copeland A."/>
            <person name="Lapidus A."/>
            <person name="Glavina del Rio T."/>
            <person name="Dalin E."/>
            <person name="Tice H."/>
            <person name="Bruce D."/>
            <person name="Goodwin L."/>
            <person name="Pitluck S."/>
            <person name="Schmutz J."/>
            <person name="Larimer F."/>
            <person name="Land M."/>
            <person name="Hauser L."/>
            <person name="Kyrpides N."/>
            <person name="Mikhailova N."/>
            <person name="Zhao F."/>
            <person name="Li T."/>
            <person name="Liu Z."/>
            <person name="Overmann J."/>
            <person name="Bryant D.A."/>
            <person name="Richardson P."/>
        </authorList>
    </citation>
    <scope>NUCLEOTIDE SEQUENCE [LARGE SCALE GENOMIC DNA]</scope>
    <source>
        <strain>DSM 263 / NCIMB 8327</strain>
    </source>
</reference>
<name>SYFA_CHLP8</name>
<accession>B3QRM0</accession>
<keyword id="KW-0030">Aminoacyl-tRNA synthetase</keyword>
<keyword id="KW-0067">ATP-binding</keyword>
<keyword id="KW-0963">Cytoplasm</keyword>
<keyword id="KW-0436">Ligase</keyword>
<keyword id="KW-0460">Magnesium</keyword>
<keyword id="KW-0479">Metal-binding</keyword>
<keyword id="KW-0547">Nucleotide-binding</keyword>
<keyword id="KW-0648">Protein biosynthesis</keyword>
<evidence type="ECO:0000255" key="1">
    <source>
        <dbReference type="HAMAP-Rule" id="MF_00281"/>
    </source>
</evidence>
<protein>
    <recommendedName>
        <fullName evidence="1">Phenylalanine--tRNA ligase alpha subunit</fullName>
        <ecNumber evidence="1">6.1.1.20</ecNumber>
    </recommendedName>
    <alternativeName>
        <fullName evidence="1">Phenylalanyl-tRNA synthetase alpha subunit</fullName>
        <shortName evidence="1">PheRS</shortName>
    </alternativeName>
</protein>
<organism>
    <name type="scientific">Chlorobaculum parvum (strain DSM 263 / NCIMB 8327)</name>
    <name type="common">Chlorobium vibrioforme subsp. thiosulfatophilum</name>
    <dbReference type="NCBI Taxonomy" id="517417"/>
    <lineage>
        <taxon>Bacteria</taxon>
        <taxon>Pseudomonadati</taxon>
        <taxon>Chlorobiota</taxon>
        <taxon>Chlorobiia</taxon>
        <taxon>Chlorobiales</taxon>
        <taxon>Chlorobiaceae</taxon>
        <taxon>Chlorobaculum</taxon>
    </lineage>
</organism>